<gene>
    <name evidence="1" type="primary">fucI</name>
    <name type="ordered locus">ECIAI1_2912</name>
</gene>
<reference key="1">
    <citation type="journal article" date="2009" name="PLoS Genet.">
        <title>Organised genome dynamics in the Escherichia coli species results in highly diverse adaptive paths.</title>
        <authorList>
            <person name="Touchon M."/>
            <person name="Hoede C."/>
            <person name="Tenaillon O."/>
            <person name="Barbe V."/>
            <person name="Baeriswyl S."/>
            <person name="Bidet P."/>
            <person name="Bingen E."/>
            <person name="Bonacorsi S."/>
            <person name="Bouchier C."/>
            <person name="Bouvet O."/>
            <person name="Calteau A."/>
            <person name="Chiapello H."/>
            <person name="Clermont O."/>
            <person name="Cruveiller S."/>
            <person name="Danchin A."/>
            <person name="Diard M."/>
            <person name="Dossat C."/>
            <person name="Karoui M.E."/>
            <person name="Frapy E."/>
            <person name="Garry L."/>
            <person name="Ghigo J.M."/>
            <person name="Gilles A.M."/>
            <person name="Johnson J."/>
            <person name="Le Bouguenec C."/>
            <person name="Lescat M."/>
            <person name="Mangenot S."/>
            <person name="Martinez-Jehanne V."/>
            <person name="Matic I."/>
            <person name="Nassif X."/>
            <person name="Oztas S."/>
            <person name="Petit M.A."/>
            <person name="Pichon C."/>
            <person name="Rouy Z."/>
            <person name="Ruf C.S."/>
            <person name="Schneider D."/>
            <person name="Tourret J."/>
            <person name="Vacherie B."/>
            <person name="Vallenet D."/>
            <person name="Medigue C."/>
            <person name="Rocha E.P.C."/>
            <person name="Denamur E."/>
        </authorList>
    </citation>
    <scope>NUCLEOTIDE SEQUENCE [LARGE SCALE GENOMIC DNA]</scope>
    <source>
        <strain>IAI1</strain>
    </source>
</reference>
<protein>
    <recommendedName>
        <fullName evidence="1">L-fucose isomerase</fullName>
        <ecNumber evidence="1">5.3.1.25</ecNumber>
    </recommendedName>
    <alternativeName>
        <fullName evidence="1">6-deoxy-L-galactose isomerase</fullName>
    </alternativeName>
    <alternativeName>
        <fullName>FucIase</fullName>
    </alternativeName>
</protein>
<sequence>MKKISLPKIGIRPVIDGRRMGVRESLEEQTMNMAKATAALLTEKLRHACGAAVECVISDTCIAGMAEAAACEEKFSSQNVGLTITVTPCWCYGSETIDMDPTRPKAIWGFNGTERPGAVYLAAALAAHSQKGIPAFSIYGHDVQDADDTSIPADVEEKLLRFARAGLAVASMKGKSYLSLGGVSMGIAGSIVDHNFFESWLGMKVQAVDMTELRRRIDQKIYDEAELEMALAWADKNFRYGEDENNKQYQRNAEQSRAVLRESLLMAMCIRDMMQGNSKLADIGRVEESLGYNAIAAGFQGQRHWTDQYPNGDTAEAILNSSFDWNGVREPFVVATENDSLNGVAMLMGHQLTGTAQVFADVRTYWSPEAIERVTGHKLDGLAEHGIIHLINSGSAALDGSCKQRDSEGNPTMKPHWEISQQEADACLAATEWCPAIHEYFRGGGYSSRFLTEGGVPFTMTRVNIIKGLGPVLQIAEGWSVELPKDVHDILNKRTNSTWPTTWFAPRLTGKGPFTDVYSVMANWGANHGVLTIGHVGADFITLASMLRIPVCMHNVEETKVYRPSAWAAHGMDIEGQDYRACQNYGPLYKR</sequence>
<proteinExistence type="inferred from homology"/>
<name>FUCI_ECO8A</name>
<feature type="chain" id="PRO_1000139951" description="L-fucose isomerase">
    <location>
        <begin position="1"/>
        <end position="591"/>
    </location>
</feature>
<feature type="active site" description="Proton acceptor" evidence="1">
    <location>
        <position position="337"/>
    </location>
</feature>
<feature type="active site" description="Proton acceptor" evidence="1">
    <location>
        <position position="361"/>
    </location>
</feature>
<feature type="binding site" evidence="1">
    <location>
        <position position="337"/>
    </location>
    <ligand>
        <name>Mn(2+)</name>
        <dbReference type="ChEBI" id="CHEBI:29035"/>
    </ligand>
</feature>
<feature type="binding site" evidence="1">
    <location>
        <position position="361"/>
    </location>
    <ligand>
        <name>Mn(2+)</name>
        <dbReference type="ChEBI" id="CHEBI:29035"/>
    </ligand>
</feature>
<feature type="binding site" evidence="1">
    <location>
        <position position="528"/>
    </location>
    <ligand>
        <name>Mn(2+)</name>
        <dbReference type="ChEBI" id="CHEBI:29035"/>
    </ligand>
</feature>
<keyword id="KW-0119">Carbohydrate metabolism</keyword>
<keyword id="KW-0963">Cytoplasm</keyword>
<keyword id="KW-0294">Fucose metabolism</keyword>
<keyword id="KW-0413">Isomerase</keyword>
<keyword id="KW-0464">Manganese</keyword>
<keyword id="KW-0479">Metal-binding</keyword>
<comment type="function">
    <text evidence="1">Converts the aldose L-fucose into the corresponding ketose L-fuculose.</text>
</comment>
<comment type="catalytic activity">
    <reaction evidence="1">
        <text>L-fucose = L-fuculose</text>
        <dbReference type="Rhea" id="RHEA:17233"/>
        <dbReference type="ChEBI" id="CHEBI:2181"/>
        <dbReference type="ChEBI" id="CHEBI:17617"/>
        <dbReference type="EC" id="5.3.1.25"/>
    </reaction>
</comment>
<comment type="cofactor">
    <cofactor evidence="1">
        <name>Mn(2+)</name>
        <dbReference type="ChEBI" id="CHEBI:29035"/>
    </cofactor>
</comment>
<comment type="pathway">
    <text evidence="1">Carbohydrate degradation; L-fucose degradation; L-lactaldehyde and glycerone phosphate from L-fucose: step 1/3.</text>
</comment>
<comment type="subunit">
    <text evidence="1">Homohexamer.</text>
</comment>
<comment type="subcellular location">
    <subcellularLocation>
        <location evidence="1">Cytoplasm</location>
    </subcellularLocation>
</comment>
<comment type="similarity">
    <text evidence="1">Belongs to the L-fucose isomerase family.</text>
</comment>
<evidence type="ECO:0000255" key="1">
    <source>
        <dbReference type="HAMAP-Rule" id="MF_01254"/>
    </source>
</evidence>
<dbReference type="EC" id="5.3.1.25" evidence="1"/>
<dbReference type="EMBL" id="CU928160">
    <property type="protein sequence ID" value="CAQ99730.1"/>
    <property type="molecule type" value="Genomic_DNA"/>
</dbReference>
<dbReference type="RefSeq" id="WP_000724153.1">
    <property type="nucleotide sequence ID" value="NC_011741.1"/>
</dbReference>
<dbReference type="SMR" id="B7LXL8"/>
<dbReference type="GeneID" id="75172886"/>
<dbReference type="KEGG" id="ecr:ECIAI1_2912"/>
<dbReference type="HOGENOM" id="CLU_033326_1_0_6"/>
<dbReference type="UniPathway" id="UPA00563">
    <property type="reaction ID" value="UER00624"/>
</dbReference>
<dbReference type="GO" id="GO:0005737">
    <property type="term" value="C:cytoplasm"/>
    <property type="evidence" value="ECO:0007669"/>
    <property type="project" value="UniProtKB-SubCell"/>
</dbReference>
<dbReference type="GO" id="GO:0008790">
    <property type="term" value="F:arabinose isomerase activity"/>
    <property type="evidence" value="ECO:0007669"/>
    <property type="project" value="TreeGrafter"/>
</dbReference>
<dbReference type="GO" id="GO:0008736">
    <property type="term" value="F:L-fucose isomerase activity"/>
    <property type="evidence" value="ECO:0007669"/>
    <property type="project" value="UniProtKB-UniRule"/>
</dbReference>
<dbReference type="GO" id="GO:0030145">
    <property type="term" value="F:manganese ion binding"/>
    <property type="evidence" value="ECO:0007669"/>
    <property type="project" value="UniProtKB-UniRule"/>
</dbReference>
<dbReference type="GO" id="GO:0019571">
    <property type="term" value="P:D-arabinose catabolic process"/>
    <property type="evidence" value="ECO:0007669"/>
    <property type="project" value="TreeGrafter"/>
</dbReference>
<dbReference type="GO" id="GO:0042355">
    <property type="term" value="P:L-fucose catabolic process"/>
    <property type="evidence" value="ECO:0007669"/>
    <property type="project" value="UniProtKB-UniRule"/>
</dbReference>
<dbReference type="CDD" id="cd03556">
    <property type="entry name" value="L-fucose_isomerase"/>
    <property type="match status" value="1"/>
</dbReference>
<dbReference type="FunFam" id="3.20.14.10:FF:000001">
    <property type="entry name" value="L-fucose isomerase"/>
    <property type="match status" value="1"/>
</dbReference>
<dbReference type="FunFam" id="3.40.275.10:FF:000001">
    <property type="entry name" value="L-fucose isomerase"/>
    <property type="match status" value="1"/>
</dbReference>
<dbReference type="FunFam" id="3.40.50.1070:FF:000001">
    <property type="entry name" value="L-fucose isomerase"/>
    <property type="match status" value="1"/>
</dbReference>
<dbReference type="Gene3D" id="3.40.50.1070">
    <property type="match status" value="1"/>
</dbReference>
<dbReference type="Gene3D" id="3.40.275.10">
    <property type="entry name" value="L-fucose Isomerase, Chain A, domain 2"/>
    <property type="match status" value="1"/>
</dbReference>
<dbReference type="Gene3D" id="3.20.14.10">
    <property type="entry name" value="L-fucose/L-arabinose isomerase, C-terminal"/>
    <property type="match status" value="1"/>
</dbReference>
<dbReference type="HAMAP" id="MF_01254">
    <property type="entry name" value="Fucose_iso"/>
    <property type="match status" value="1"/>
</dbReference>
<dbReference type="InterPro" id="IPR004216">
    <property type="entry name" value="Fuc/Ara_isomerase_C"/>
</dbReference>
<dbReference type="InterPro" id="IPR038393">
    <property type="entry name" value="Fuc_iso_dom3_sf"/>
</dbReference>
<dbReference type="InterPro" id="IPR015888">
    <property type="entry name" value="Fuc_isomerase_C"/>
</dbReference>
<dbReference type="InterPro" id="IPR038391">
    <property type="entry name" value="Fucose_iso_dom1_sf"/>
</dbReference>
<dbReference type="InterPro" id="IPR012888">
    <property type="entry name" value="Fucose_iso_N1"/>
</dbReference>
<dbReference type="InterPro" id="IPR005763">
    <property type="entry name" value="Fucose_isomerase"/>
</dbReference>
<dbReference type="InterPro" id="IPR038392">
    <property type="entry name" value="Fucose_isomerase_dom2_sf"/>
</dbReference>
<dbReference type="InterPro" id="IPR009015">
    <property type="entry name" value="Fucose_isomerase_N/cen_sf"/>
</dbReference>
<dbReference type="InterPro" id="IPR012889">
    <property type="entry name" value="Fucose_isomerase_N2"/>
</dbReference>
<dbReference type="NCBIfam" id="TIGR01089">
    <property type="entry name" value="fucI"/>
    <property type="match status" value="1"/>
</dbReference>
<dbReference type="NCBIfam" id="NF008220">
    <property type="entry name" value="PRK10991.1"/>
    <property type="match status" value="1"/>
</dbReference>
<dbReference type="PANTHER" id="PTHR37840">
    <property type="entry name" value="L-FUCOSE ISOMERASE"/>
    <property type="match status" value="1"/>
</dbReference>
<dbReference type="PANTHER" id="PTHR37840:SF1">
    <property type="entry name" value="L-FUCOSE ISOMERASE"/>
    <property type="match status" value="1"/>
</dbReference>
<dbReference type="Pfam" id="PF02952">
    <property type="entry name" value="Fucose_iso_C"/>
    <property type="match status" value="1"/>
</dbReference>
<dbReference type="Pfam" id="PF07881">
    <property type="entry name" value="Fucose_iso_N1"/>
    <property type="match status" value="1"/>
</dbReference>
<dbReference type="Pfam" id="PF07882">
    <property type="entry name" value="Fucose_iso_N2"/>
    <property type="match status" value="1"/>
</dbReference>
<dbReference type="SUPFAM" id="SSF50443">
    <property type="entry name" value="FucI/AraA C-terminal domain-like"/>
    <property type="match status" value="1"/>
</dbReference>
<dbReference type="SUPFAM" id="SSF53743">
    <property type="entry name" value="FucI/AraA N-terminal and middle domains"/>
    <property type="match status" value="1"/>
</dbReference>
<accession>B7LXL8</accession>
<organism>
    <name type="scientific">Escherichia coli O8 (strain IAI1)</name>
    <dbReference type="NCBI Taxonomy" id="585034"/>
    <lineage>
        <taxon>Bacteria</taxon>
        <taxon>Pseudomonadati</taxon>
        <taxon>Pseudomonadota</taxon>
        <taxon>Gammaproteobacteria</taxon>
        <taxon>Enterobacterales</taxon>
        <taxon>Enterobacteriaceae</taxon>
        <taxon>Escherichia</taxon>
    </lineage>
</organism>